<keyword id="KW-0134">Cell wall</keyword>
<keyword id="KW-0961">Cell wall biogenesis/degradation</keyword>
<keyword id="KW-0325">Glycoprotein</keyword>
<keyword id="KW-0379">Hydroxylation</keyword>
<keyword id="KW-0433">Leucine-rich repeat</keyword>
<keyword id="KW-1185">Reference proteome</keyword>
<keyword id="KW-0677">Repeat</keyword>
<keyword id="KW-0964">Secreted</keyword>
<keyword id="KW-0732">Signal</keyword>
<name>LRX6_ARATH</name>
<protein>
    <recommendedName>
        <fullName>Leucine-rich repeat extensin-like protein 6</fullName>
        <shortName>AtLRX6</shortName>
        <shortName>LRR/EXTENSIN6</shortName>
    </recommendedName>
    <alternativeName>
        <fullName>Cell wall hydroxyproline-rich glycoprotein</fullName>
    </alternativeName>
</protein>
<dbReference type="EMBL" id="AB022223">
    <property type="protein sequence ID" value="BAB01255.1"/>
    <property type="molecule type" value="Genomic_DNA"/>
</dbReference>
<dbReference type="EMBL" id="CP002686">
    <property type="protein sequence ID" value="AEE76678.1"/>
    <property type="molecule type" value="Genomic_DNA"/>
</dbReference>
<dbReference type="EMBL" id="BT053757">
    <property type="protein sequence ID" value="ACL13984.1"/>
    <property type="molecule type" value="mRNA"/>
</dbReference>
<dbReference type="RefSeq" id="NP_188919.1">
    <property type="nucleotide sequence ID" value="NM_113179.4"/>
</dbReference>
<dbReference type="SMR" id="Q9LUI1"/>
<dbReference type="FunCoup" id="Q9LUI1">
    <property type="interactions" value="465"/>
</dbReference>
<dbReference type="STRING" id="3702.Q9LUI1"/>
<dbReference type="GlyCosmos" id="Q9LUI1">
    <property type="glycosylation" value="2 sites, No reported glycans"/>
</dbReference>
<dbReference type="GlyGen" id="Q9LUI1">
    <property type="glycosylation" value="2 sites"/>
</dbReference>
<dbReference type="PaxDb" id="3702-AT3G22800.1"/>
<dbReference type="ProteomicsDB" id="238577"/>
<dbReference type="EnsemblPlants" id="AT3G22800.1">
    <property type="protein sequence ID" value="AT3G22800.1"/>
    <property type="gene ID" value="AT3G22800"/>
</dbReference>
<dbReference type="GeneID" id="821851"/>
<dbReference type="Gramene" id="AT3G22800.1">
    <property type="protein sequence ID" value="AT3G22800.1"/>
    <property type="gene ID" value="AT3G22800"/>
</dbReference>
<dbReference type="KEGG" id="ath:AT3G22800"/>
<dbReference type="Araport" id="AT3G22800"/>
<dbReference type="TAIR" id="AT3G22800"/>
<dbReference type="eggNOG" id="ENOG502QTD8">
    <property type="taxonomic scope" value="Eukaryota"/>
</dbReference>
<dbReference type="HOGENOM" id="CLU_000288_23_5_1"/>
<dbReference type="InParanoid" id="Q9LUI1"/>
<dbReference type="OMA" id="GCWPTSP"/>
<dbReference type="PhylomeDB" id="Q9LUI1"/>
<dbReference type="PRO" id="PR:Q9LUI1"/>
<dbReference type="Proteomes" id="UP000006548">
    <property type="component" value="Chromosome 3"/>
</dbReference>
<dbReference type="ExpressionAtlas" id="Q9LUI1">
    <property type="expression patterns" value="baseline and differential"/>
</dbReference>
<dbReference type="GO" id="GO:0005576">
    <property type="term" value="C:extracellular region"/>
    <property type="evidence" value="ECO:0007669"/>
    <property type="project" value="UniProtKB-KW"/>
</dbReference>
<dbReference type="GO" id="GO:0005199">
    <property type="term" value="F:structural constituent of cell wall"/>
    <property type="evidence" value="ECO:0000250"/>
    <property type="project" value="TAIR"/>
</dbReference>
<dbReference type="GO" id="GO:0071555">
    <property type="term" value="P:cell wall organization"/>
    <property type="evidence" value="ECO:0007669"/>
    <property type="project" value="UniProtKB-KW"/>
</dbReference>
<dbReference type="FunFam" id="3.80.10.10:FF:000224">
    <property type="entry name" value="Leucine-rich repeat extensin-like protein 1"/>
    <property type="match status" value="1"/>
</dbReference>
<dbReference type="FunFam" id="3.80.10.10:FF:000631">
    <property type="entry name" value="Leucine-rich repeat extensin-like protein 5"/>
    <property type="match status" value="1"/>
</dbReference>
<dbReference type="Gene3D" id="3.80.10.10">
    <property type="entry name" value="Ribonuclease Inhibitor"/>
    <property type="match status" value="2"/>
</dbReference>
<dbReference type="InterPro" id="IPR001611">
    <property type="entry name" value="Leu-rich_rpt"/>
</dbReference>
<dbReference type="InterPro" id="IPR032675">
    <property type="entry name" value="LRR_dom_sf"/>
</dbReference>
<dbReference type="InterPro" id="IPR051582">
    <property type="entry name" value="LRR_extensin-like_regulator"/>
</dbReference>
<dbReference type="InterPro" id="IPR013210">
    <property type="entry name" value="LRR_N_plant-typ"/>
</dbReference>
<dbReference type="PANTHER" id="PTHR32093">
    <property type="entry name" value="LEUCINE-RICH REPEAT EXTENSIN-LIKE PROTEIN 3-RELATED"/>
    <property type="match status" value="1"/>
</dbReference>
<dbReference type="PANTHER" id="PTHR32093:SF121">
    <property type="entry name" value="LEUCINE-RICH REPEAT EXTENSIN-LIKE PROTEIN 6"/>
    <property type="match status" value="1"/>
</dbReference>
<dbReference type="Pfam" id="PF00560">
    <property type="entry name" value="LRR_1"/>
    <property type="match status" value="1"/>
</dbReference>
<dbReference type="Pfam" id="PF13855">
    <property type="entry name" value="LRR_8"/>
    <property type="match status" value="1"/>
</dbReference>
<dbReference type="Pfam" id="PF08263">
    <property type="entry name" value="LRRNT_2"/>
    <property type="match status" value="1"/>
</dbReference>
<dbReference type="PRINTS" id="PR01217">
    <property type="entry name" value="PRICHEXTENSN"/>
</dbReference>
<dbReference type="SUPFAM" id="SSF52058">
    <property type="entry name" value="L domain-like"/>
    <property type="match status" value="1"/>
</dbReference>
<proteinExistence type="evidence at transcript level"/>
<evidence type="ECO:0000250" key="1"/>
<evidence type="ECO:0000255" key="2"/>
<evidence type="ECO:0000256" key="3">
    <source>
        <dbReference type="SAM" id="MobiDB-lite"/>
    </source>
</evidence>
<evidence type="ECO:0000269" key="4">
    <source>
    </source>
</evidence>
<organism>
    <name type="scientific">Arabidopsis thaliana</name>
    <name type="common">Mouse-ear cress</name>
    <dbReference type="NCBI Taxonomy" id="3702"/>
    <lineage>
        <taxon>Eukaryota</taxon>
        <taxon>Viridiplantae</taxon>
        <taxon>Streptophyta</taxon>
        <taxon>Embryophyta</taxon>
        <taxon>Tracheophyta</taxon>
        <taxon>Spermatophyta</taxon>
        <taxon>Magnoliopsida</taxon>
        <taxon>eudicotyledons</taxon>
        <taxon>Gunneridae</taxon>
        <taxon>Pentapetalae</taxon>
        <taxon>rosids</taxon>
        <taxon>malvids</taxon>
        <taxon>Brassicales</taxon>
        <taxon>Brassicaceae</taxon>
        <taxon>Camelineae</taxon>
        <taxon>Arabidopsis</taxon>
    </lineage>
</organism>
<reference key="1">
    <citation type="journal article" date="2000" name="DNA Res.">
        <title>Structural analysis of Arabidopsis thaliana chromosome 3. I. Sequence features of the regions of 4,504,864 bp covered by sixty P1 and TAC clones.</title>
        <authorList>
            <person name="Sato S."/>
            <person name="Nakamura Y."/>
            <person name="Kaneko T."/>
            <person name="Katoh T."/>
            <person name="Asamizu E."/>
            <person name="Tabata S."/>
        </authorList>
    </citation>
    <scope>NUCLEOTIDE SEQUENCE [LARGE SCALE GENOMIC DNA]</scope>
    <source>
        <strain>cv. Columbia</strain>
    </source>
</reference>
<reference key="2">
    <citation type="journal article" date="2017" name="Plant J.">
        <title>Araport11: a complete reannotation of the Arabidopsis thaliana reference genome.</title>
        <authorList>
            <person name="Cheng C.Y."/>
            <person name="Krishnakumar V."/>
            <person name="Chan A.P."/>
            <person name="Thibaud-Nissen F."/>
            <person name="Schobel S."/>
            <person name="Town C.D."/>
        </authorList>
    </citation>
    <scope>GENOME REANNOTATION</scope>
    <source>
        <strain>cv. Columbia</strain>
    </source>
</reference>
<reference key="3">
    <citation type="submission" date="2009-01" db="EMBL/GenBank/DDBJ databases">
        <title>Arabidopsis ORF clones.</title>
        <authorList>
            <person name="de los Reyes C."/>
            <person name="Quan R."/>
            <person name="Chen H."/>
            <person name="Bautista V."/>
            <person name="Kim C.J."/>
            <person name="Ecker J.R."/>
        </authorList>
    </citation>
    <scope>NUCLEOTIDE SEQUENCE [LARGE SCALE MRNA]</scope>
    <source>
        <strain>cv. Columbia</strain>
    </source>
</reference>
<reference key="4">
    <citation type="journal article" date="2003" name="Plant Physiol.">
        <title>Whole-genome comparison of leucine-rich repeat extensins in Arabidopsis and rice. A conserved family of cell wall proteins form a vegetative and a reproductive clade.</title>
        <authorList>
            <person name="Baumberger N."/>
            <person name="Doesseger B."/>
            <person name="Guyot R."/>
            <person name="Diet A."/>
            <person name="Parsons R.L."/>
            <person name="Clark M.A."/>
            <person name="Simmons M.P."/>
            <person name="Bedinger P."/>
            <person name="Goff S.A."/>
            <person name="Ringli C."/>
            <person name="Keller B."/>
        </authorList>
    </citation>
    <scope>TISSUE SPECIFICITY</scope>
    <scope>DEVELOPMENTAL STAGE</scope>
    <scope>GENE FAMILY</scope>
    <scope>NOMENCLATURE</scope>
</reference>
<gene>
    <name type="primary">LRX6</name>
    <name type="ordered locus">At3g22800</name>
    <name type="ORF">MWI23.17</name>
</gene>
<feature type="signal peptide" evidence="2">
    <location>
        <begin position="1"/>
        <end position="28"/>
    </location>
</feature>
<feature type="chain" id="PRO_0000395466" description="Leucine-rich repeat extensin-like protein 6">
    <location>
        <begin position="29"/>
        <end position="470"/>
    </location>
</feature>
<feature type="repeat" description="LRR 1">
    <location>
        <begin position="98"/>
        <end position="122"/>
    </location>
</feature>
<feature type="repeat" description="LRR 2">
    <location>
        <begin position="123"/>
        <end position="146"/>
    </location>
</feature>
<feature type="repeat" description="LRR 3">
    <location>
        <begin position="147"/>
        <end position="170"/>
    </location>
</feature>
<feature type="repeat" description="LRR 4">
    <location>
        <begin position="171"/>
        <end position="194"/>
    </location>
</feature>
<feature type="repeat" description="LRR 5">
    <location>
        <begin position="196"/>
        <end position="217"/>
    </location>
</feature>
<feature type="repeat" description="LRR 6">
    <location>
        <begin position="219"/>
        <end position="241"/>
    </location>
</feature>
<feature type="repeat" description="LRR 7">
    <location>
        <begin position="243"/>
        <end position="265"/>
    </location>
</feature>
<feature type="repeat" description="LRR 8">
    <location>
        <begin position="266"/>
        <end position="290"/>
    </location>
</feature>
<feature type="repeat" description="LRR 9">
    <location>
        <begin position="291"/>
        <end position="314"/>
    </location>
</feature>
<feature type="repeat" description="LRR 10">
    <location>
        <begin position="316"/>
        <end position="337"/>
    </location>
</feature>
<feature type="region of interest" description="Contains the Ser-Pro(4) repeats">
    <location>
        <begin position="378"/>
        <end position="470"/>
    </location>
</feature>
<feature type="region of interest" description="Disordered" evidence="3">
    <location>
        <begin position="378"/>
        <end position="411"/>
    </location>
</feature>
<feature type="glycosylation site" description="N-linked (GlcNAc...) asparagine" evidence="2">
    <location>
        <position position="83"/>
    </location>
</feature>
<feature type="glycosylation site" description="N-linked (GlcNAc...) asparagine" evidence="2">
    <location>
        <position position="319"/>
    </location>
</feature>
<sequence>MREDTFFFQWWFLVSGLSFIFLLPQAFTYHTPPINPCFAHPFLPPITNPRLLKAFTALQAWKFTITSDPNGFTSNWCGPNVCNYTGVFCAPALDNPYVLTVAGIDLNHANIAGYLPLELGLLTDLALFHINSNRFQGQLPKTLKCLHLLHELDVSNNKLSGEFPSVIFSLPSLKFLDIRFNEFQGDVPSQLFDLNLDALFINDNKFQFRLPRNIGNSPVSVLVLANNDLQGSCVPPSFYKMGKTLHEIIITNSQLTGCLNREIGLLNQLTVFDVSYNNLVGSLPETIGDMKSLEQLNIAHNKFSGYIPESICRLPRLENFTYSYNFFSGEPPACLRLQEFDDRRNCLPSRPMQRSLAECKSFSSYPIDCASFGCSPPSPPPPPPPPPPPPPPPPPPPPPPPPPPPPPYVYPSPPPPPPSPPPYVYPPPPPPYVYPPPPSPPYVYPPPPPSPQPYMYPSPPCNDLPTPVHY</sequence>
<comment type="function">
    <text evidence="1">Modulates cell morphogenesis by regulating cell wall formation and assembly, and/or growth polarization.</text>
</comment>
<comment type="subcellular location">
    <subcellularLocation>
        <location evidence="1">Secreted</location>
        <location evidence="1">Cell wall</location>
    </subcellularLocation>
</comment>
<comment type="tissue specificity">
    <text evidence="4">Expressed in roots.</text>
</comment>
<comment type="developmental stage">
    <text evidence="4">Observed in emerging secondary roots.</text>
</comment>
<comment type="PTM">
    <text evidence="1">Hydroxylated on proline residues in the S-P-P-P-P repeat.</text>
</comment>
<comment type="PTM">
    <text evidence="1">O-glycosylated on hydroxyprolines.</text>
</comment>
<accession>Q9LUI1</accession>